<comment type="similarity">
    <text evidence="3">Belongs to the CCDC43 family.</text>
</comment>
<protein>
    <recommendedName>
        <fullName>Coiled-coil domain-containing protein 43</fullName>
    </recommendedName>
</protein>
<evidence type="ECO:0000255" key="1"/>
<evidence type="ECO:0000256" key="2">
    <source>
        <dbReference type="SAM" id="MobiDB-lite"/>
    </source>
</evidence>
<evidence type="ECO:0000305" key="3"/>
<keyword id="KW-0175">Coiled coil</keyword>
<keyword id="KW-1185">Reference proteome</keyword>
<organism>
    <name type="scientific">Danio rerio</name>
    <name type="common">Zebrafish</name>
    <name type="synonym">Brachydanio rerio</name>
    <dbReference type="NCBI Taxonomy" id="7955"/>
    <lineage>
        <taxon>Eukaryota</taxon>
        <taxon>Metazoa</taxon>
        <taxon>Chordata</taxon>
        <taxon>Craniata</taxon>
        <taxon>Vertebrata</taxon>
        <taxon>Euteleostomi</taxon>
        <taxon>Actinopterygii</taxon>
        <taxon>Neopterygii</taxon>
        <taxon>Teleostei</taxon>
        <taxon>Ostariophysi</taxon>
        <taxon>Cypriniformes</taxon>
        <taxon>Danionidae</taxon>
        <taxon>Danioninae</taxon>
        <taxon>Danio</taxon>
    </lineage>
</organism>
<dbReference type="EMBL" id="BC057502">
    <property type="protein sequence ID" value="AAH57502.1"/>
    <property type="molecule type" value="mRNA"/>
</dbReference>
<dbReference type="RefSeq" id="NP_956952.1">
    <property type="nucleotide sequence ID" value="NM_200658.2"/>
</dbReference>
<dbReference type="SMR" id="Q6PFL6"/>
<dbReference type="FunCoup" id="Q6PFL6">
    <property type="interactions" value="591"/>
</dbReference>
<dbReference type="STRING" id="7955.ENSDARP00000071111"/>
<dbReference type="PaxDb" id="7955-ENSDARP00000071111"/>
<dbReference type="GeneID" id="393631"/>
<dbReference type="KEGG" id="dre:393631"/>
<dbReference type="AGR" id="ZFIN:ZDB-GENE-040426-1587"/>
<dbReference type="CTD" id="124808"/>
<dbReference type="ZFIN" id="ZDB-GENE-040426-1587">
    <property type="gene designation" value="ccdc43"/>
</dbReference>
<dbReference type="eggNOG" id="ENOG502RYDM">
    <property type="taxonomic scope" value="Eukaryota"/>
</dbReference>
<dbReference type="InParanoid" id="Q6PFL6"/>
<dbReference type="OrthoDB" id="2187466at2759"/>
<dbReference type="PhylomeDB" id="Q6PFL6"/>
<dbReference type="PRO" id="PR:Q6PFL6"/>
<dbReference type="Proteomes" id="UP000000437">
    <property type="component" value="Chromosome 3"/>
</dbReference>
<dbReference type="InterPro" id="IPR037666">
    <property type="entry name" value="CCDC43"/>
</dbReference>
<dbReference type="PANTHER" id="PTHR31684">
    <property type="entry name" value="COILED-COIL DOMAIN-CONTAINING PROTEIN 43"/>
    <property type="match status" value="1"/>
</dbReference>
<dbReference type="PANTHER" id="PTHR31684:SF2">
    <property type="entry name" value="COILED-COIL DOMAIN-CONTAINING PROTEIN 43"/>
    <property type="match status" value="1"/>
</dbReference>
<name>CCD43_DANRE</name>
<accession>Q6PFL6</accession>
<feature type="chain" id="PRO_0000234504" description="Coiled-coil domain-containing protein 43">
    <location>
        <begin position="1"/>
        <end position="213"/>
    </location>
</feature>
<feature type="region of interest" description="Disordered" evidence="2">
    <location>
        <begin position="127"/>
        <end position="213"/>
    </location>
</feature>
<feature type="coiled-coil region" evidence="1">
    <location>
        <begin position="119"/>
        <end position="206"/>
    </location>
</feature>
<feature type="compositionally biased region" description="Acidic residues" evidence="2">
    <location>
        <begin position="131"/>
        <end position="142"/>
    </location>
</feature>
<feature type="compositionally biased region" description="Basic and acidic residues" evidence="2">
    <location>
        <begin position="169"/>
        <end position="200"/>
    </location>
</feature>
<feature type="compositionally biased region" description="Basic residues" evidence="2">
    <location>
        <begin position="201"/>
        <end position="213"/>
    </location>
</feature>
<gene>
    <name type="primary">ccdc43</name>
    <name type="ORF">zgc:66277</name>
</gene>
<reference key="1">
    <citation type="submission" date="2003-09" db="EMBL/GenBank/DDBJ databases">
        <authorList>
            <consortium name="NIH - Zebrafish Gene Collection (ZGC) project"/>
        </authorList>
    </citation>
    <scope>NUCLEOTIDE SEQUENCE [LARGE SCALE MRNA]</scope>
    <source>
        <strain>SJD</strain>
    </source>
</reference>
<proteinExistence type="evidence at transcript level"/>
<sequence length="213" mass="24559">MAAPEQIAGEFENWLNERLDSLEVDREVYGAYILGVLQEEESDEEQKDALQGILSAFLEEETLEEVCQEILKQWTECCSRSGAKSNQADAEVQAIASLIEKQAQIVVKQKEVSEDAKKRKEAVLAQYANVTDDEDEAEEEEQVPVGIPSDKSLFKNTNVEDVLNRRKLQRDQAKEDAQKKKEQDKMQREKDKLSKQERKDKEKKRTQKGERKR</sequence>